<gene>
    <name evidence="1" type="primary">rpoB</name>
    <name type="ordered locus">YpsIP31758_3860</name>
</gene>
<evidence type="ECO:0000255" key="1">
    <source>
        <dbReference type="HAMAP-Rule" id="MF_01321"/>
    </source>
</evidence>
<organism>
    <name type="scientific">Yersinia pseudotuberculosis serotype O:1b (strain IP 31758)</name>
    <dbReference type="NCBI Taxonomy" id="349747"/>
    <lineage>
        <taxon>Bacteria</taxon>
        <taxon>Pseudomonadati</taxon>
        <taxon>Pseudomonadota</taxon>
        <taxon>Gammaproteobacteria</taxon>
        <taxon>Enterobacterales</taxon>
        <taxon>Yersiniaceae</taxon>
        <taxon>Yersinia</taxon>
    </lineage>
</organism>
<name>RPOB_YERP3</name>
<dbReference type="EC" id="2.7.7.6" evidence="1"/>
<dbReference type="EMBL" id="CP000720">
    <property type="protein sequence ID" value="ABS49000.1"/>
    <property type="molecule type" value="Genomic_DNA"/>
</dbReference>
<dbReference type="RefSeq" id="WP_002210676.1">
    <property type="nucleotide sequence ID" value="NC_009708.1"/>
</dbReference>
<dbReference type="SMR" id="A7FNI3"/>
<dbReference type="GeneID" id="57974971"/>
<dbReference type="KEGG" id="ypi:YpsIP31758_3860"/>
<dbReference type="HOGENOM" id="CLU_000524_4_0_6"/>
<dbReference type="Proteomes" id="UP000002412">
    <property type="component" value="Chromosome"/>
</dbReference>
<dbReference type="GO" id="GO:0000428">
    <property type="term" value="C:DNA-directed RNA polymerase complex"/>
    <property type="evidence" value="ECO:0007669"/>
    <property type="project" value="UniProtKB-KW"/>
</dbReference>
<dbReference type="GO" id="GO:0003677">
    <property type="term" value="F:DNA binding"/>
    <property type="evidence" value="ECO:0007669"/>
    <property type="project" value="UniProtKB-UniRule"/>
</dbReference>
<dbReference type="GO" id="GO:0003899">
    <property type="term" value="F:DNA-directed RNA polymerase activity"/>
    <property type="evidence" value="ECO:0007669"/>
    <property type="project" value="UniProtKB-UniRule"/>
</dbReference>
<dbReference type="GO" id="GO:0032549">
    <property type="term" value="F:ribonucleoside binding"/>
    <property type="evidence" value="ECO:0007669"/>
    <property type="project" value="InterPro"/>
</dbReference>
<dbReference type="GO" id="GO:0006351">
    <property type="term" value="P:DNA-templated transcription"/>
    <property type="evidence" value="ECO:0007669"/>
    <property type="project" value="UniProtKB-UniRule"/>
</dbReference>
<dbReference type="CDD" id="cd00653">
    <property type="entry name" value="RNA_pol_B_RPB2"/>
    <property type="match status" value="1"/>
</dbReference>
<dbReference type="FunFam" id="2.30.150.10:FF:000001">
    <property type="entry name" value="DNA-directed RNA polymerase subunit beta"/>
    <property type="match status" value="1"/>
</dbReference>
<dbReference type="FunFam" id="2.40.270.10:FF:000003">
    <property type="entry name" value="DNA-directed RNA polymerase subunit beta"/>
    <property type="match status" value="1"/>
</dbReference>
<dbReference type="FunFam" id="2.40.270.10:FF:000004">
    <property type="entry name" value="DNA-directed RNA polymerase subunit beta"/>
    <property type="match status" value="1"/>
</dbReference>
<dbReference type="FunFam" id="2.40.50.100:FF:000006">
    <property type="entry name" value="DNA-directed RNA polymerase subunit beta"/>
    <property type="match status" value="1"/>
</dbReference>
<dbReference type="FunFam" id="2.40.50.150:FF:000001">
    <property type="entry name" value="DNA-directed RNA polymerase subunit beta"/>
    <property type="match status" value="1"/>
</dbReference>
<dbReference type="FunFam" id="3.90.1100.10:FF:000002">
    <property type="entry name" value="DNA-directed RNA polymerase subunit beta"/>
    <property type="match status" value="1"/>
</dbReference>
<dbReference type="FunFam" id="3.90.1110.10:FF:000001">
    <property type="entry name" value="DNA-directed RNA polymerase subunit beta"/>
    <property type="match status" value="1"/>
</dbReference>
<dbReference type="FunFam" id="3.90.1110.10:FF:000004">
    <property type="entry name" value="DNA-directed RNA polymerase subunit beta"/>
    <property type="match status" value="1"/>
</dbReference>
<dbReference type="FunFam" id="3.90.1800.10:FF:000001">
    <property type="entry name" value="DNA-directed RNA polymerase subunit beta"/>
    <property type="match status" value="1"/>
</dbReference>
<dbReference type="Gene3D" id="2.40.50.100">
    <property type="match status" value="1"/>
</dbReference>
<dbReference type="Gene3D" id="2.40.50.150">
    <property type="match status" value="1"/>
</dbReference>
<dbReference type="Gene3D" id="3.90.1100.10">
    <property type="match status" value="2"/>
</dbReference>
<dbReference type="Gene3D" id="2.30.150.10">
    <property type="entry name" value="DNA-directed RNA polymerase, beta subunit, external 1 domain"/>
    <property type="match status" value="1"/>
</dbReference>
<dbReference type="Gene3D" id="2.40.270.10">
    <property type="entry name" value="DNA-directed RNA polymerase, subunit 2, domain 6"/>
    <property type="match status" value="1"/>
</dbReference>
<dbReference type="Gene3D" id="3.90.1800.10">
    <property type="entry name" value="RNA polymerase alpha subunit dimerisation domain"/>
    <property type="match status" value="1"/>
</dbReference>
<dbReference type="Gene3D" id="3.90.1110.10">
    <property type="entry name" value="RNA polymerase Rpb2, domain 2"/>
    <property type="match status" value="1"/>
</dbReference>
<dbReference type="HAMAP" id="MF_01321">
    <property type="entry name" value="RNApol_bact_RpoB"/>
    <property type="match status" value="1"/>
</dbReference>
<dbReference type="InterPro" id="IPR042107">
    <property type="entry name" value="DNA-dir_RNA_pol_bsu_ext_1_sf"/>
</dbReference>
<dbReference type="InterPro" id="IPR019462">
    <property type="entry name" value="DNA-dir_RNA_pol_bsu_external_1"/>
</dbReference>
<dbReference type="InterPro" id="IPR015712">
    <property type="entry name" value="DNA-dir_RNA_pol_su2"/>
</dbReference>
<dbReference type="InterPro" id="IPR007120">
    <property type="entry name" value="DNA-dir_RNAP_su2_dom"/>
</dbReference>
<dbReference type="InterPro" id="IPR037033">
    <property type="entry name" value="DNA-dir_RNAP_su2_hyb_sf"/>
</dbReference>
<dbReference type="InterPro" id="IPR010243">
    <property type="entry name" value="RNA_pol_bsu_bac"/>
</dbReference>
<dbReference type="InterPro" id="IPR007121">
    <property type="entry name" value="RNA_pol_bsu_CS"/>
</dbReference>
<dbReference type="InterPro" id="IPR007644">
    <property type="entry name" value="RNA_pol_bsu_protrusion"/>
</dbReference>
<dbReference type="InterPro" id="IPR007642">
    <property type="entry name" value="RNA_pol_Rpb2_2"/>
</dbReference>
<dbReference type="InterPro" id="IPR037034">
    <property type="entry name" value="RNA_pol_Rpb2_2_sf"/>
</dbReference>
<dbReference type="InterPro" id="IPR007645">
    <property type="entry name" value="RNA_pol_Rpb2_3"/>
</dbReference>
<dbReference type="InterPro" id="IPR007641">
    <property type="entry name" value="RNA_pol_Rpb2_7"/>
</dbReference>
<dbReference type="InterPro" id="IPR014724">
    <property type="entry name" value="RNA_pol_RPB2_OB-fold"/>
</dbReference>
<dbReference type="NCBIfam" id="NF001616">
    <property type="entry name" value="PRK00405.1"/>
    <property type="match status" value="1"/>
</dbReference>
<dbReference type="NCBIfam" id="TIGR02013">
    <property type="entry name" value="rpoB"/>
    <property type="match status" value="1"/>
</dbReference>
<dbReference type="PANTHER" id="PTHR20856">
    <property type="entry name" value="DNA-DIRECTED RNA POLYMERASE I SUBUNIT 2"/>
    <property type="match status" value="1"/>
</dbReference>
<dbReference type="Pfam" id="PF04563">
    <property type="entry name" value="RNA_pol_Rpb2_1"/>
    <property type="match status" value="1"/>
</dbReference>
<dbReference type="Pfam" id="PF04561">
    <property type="entry name" value="RNA_pol_Rpb2_2"/>
    <property type="match status" value="2"/>
</dbReference>
<dbReference type="Pfam" id="PF04565">
    <property type="entry name" value="RNA_pol_Rpb2_3"/>
    <property type="match status" value="1"/>
</dbReference>
<dbReference type="Pfam" id="PF10385">
    <property type="entry name" value="RNA_pol_Rpb2_45"/>
    <property type="match status" value="1"/>
</dbReference>
<dbReference type="Pfam" id="PF00562">
    <property type="entry name" value="RNA_pol_Rpb2_6"/>
    <property type="match status" value="1"/>
</dbReference>
<dbReference type="Pfam" id="PF04560">
    <property type="entry name" value="RNA_pol_Rpb2_7"/>
    <property type="match status" value="1"/>
</dbReference>
<dbReference type="SUPFAM" id="SSF64484">
    <property type="entry name" value="beta and beta-prime subunits of DNA dependent RNA-polymerase"/>
    <property type="match status" value="1"/>
</dbReference>
<dbReference type="PROSITE" id="PS01166">
    <property type="entry name" value="RNA_POL_BETA"/>
    <property type="match status" value="1"/>
</dbReference>
<comment type="function">
    <text evidence="1">DNA-dependent RNA polymerase catalyzes the transcription of DNA into RNA using the four ribonucleoside triphosphates as substrates.</text>
</comment>
<comment type="catalytic activity">
    <reaction evidence="1">
        <text>RNA(n) + a ribonucleoside 5'-triphosphate = RNA(n+1) + diphosphate</text>
        <dbReference type="Rhea" id="RHEA:21248"/>
        <dbReference type="Rhea" id="RHEA-COMP:14527"/>
        <dbReference type="Rhea" id="RHEA-COMP:17342"/>
        <dbReference type="ChEBI" id="CHEBI:33019"/>
        <dbReference type="ChEBI" id="CHEBI:61557"/>
        <dbReference type="ChEBI" id="CHEBI:140395"/>
        <dbReference type="EC" id="2.7.7.6"/>
    </reaction>
</comment>
<comment type="subunit">
    <text evidence="1">The RNAP catalytic core consists of 2 alpha, 1 beta, 1 beta' and 1 omega subunit. When a sigma factor is associated with the core the holoenzyme is formed, which can initiate transcription.</text>
</comment>
<comment type="similarity">
    <text evidence="1">Belongs to the RNA polymerase beta chain family.</text>
</comment>
<accession>A7FNI3</accession>
<feature type="chain" id="PRO_1000067554" description="DNA-directed RNA polymerase subunit beta">
    <location>
        <begin position="1"/>
        <end position="1342"/>
    </location>
</feature>
<sequence length="1342" mass="150389">MVYSYTEKKRIRKDFGKRPQVLDIPYLLSIQLDSFQKFIEQDPEGQHGLEAAFRSVFPIQSYSGNSELQYVSYRLGEPVFDVKECQIRGVTYSAPLRVKLRLVIYEREAPEGTVKDIKEQEVYMGEIPLMTENGTFVINGTERVIVSQLHRSPGVFFDSDKGKTHSSGKVLYNARIIPYRGSWLDFEFDPKDNLFVRIDRRRKLPATIILRALNFTTAQILDLFFEKVVFEIRDNKLQMELVPERLRGETASFDIEANGKVYVEKARRITARHIRQLEKDGIDRIEVPVEYIAGKVVAKDYVDASTGELICAANMELSLDLLAKLSQAGHKQIETLFTNDLDHGAYISETLRVDPTSDRLSALVEIYRMMRPGEPPTREAAENLFENLFFSEDRYDLSAVGRMKFNRSLLRDEIEGSGILSKEDITEVMKKLIDIRNGRGEVDDIDHLGNRRIRSVGEMAENQFRVGLVRVERAVKERLSLGDLDTLMPQDMINAKPISAAVKEFFGSSQLSQFMDQNNPLSEITHKRRISALGPGGLTRERAGFEVRDVHPTHYGRVCPIETPEGPNIGLINSLSVYAQTNEYGFLETPYRRVRDGVVTDEINYLSAIEEGNFVIAQANSNLDDEGRFLEDLVTCRSKGESSLFSREQVDYMDVSTQQIVSVGASLIPFLEHDDANRALMGANMQRQAVPTLRADKPLVGTGMERAVAVDSGVTSVAKRGGTVQYVDASRIVIKVNEDEMHPGEAGIDIYNLTKYTRSNQNTCINQMPCVNLGEPIERGDVLADGPSTDLGELALGQNMRVAFMPWNGYNFEDSILVSERVVQEDRFTTIHIQELACVSRDTKLGPEEITADIPNVGEAALSKLDESGIVYIGAEVTGGDILVGKVTPKGETQLTPEEKLLRAIFGEKASDVKDSSLRVPNGVSGTVIDVQVFTRDGVEKDKRALEIEEMQLKQAKKDLTEELQILEAGLFARIHAVLVSGGIEAEKLSKLPRERWLELGLTDEDKQNQLEQLAEQYDEMKSEFEKKMDAKRRKITQGDDLAPGVLKIVKVYLAVKRQIQPGDKMAGRHGNKGVISKINPIEDMPYDENGTPVDIVLNPLGVPSRMNIGQILETHLGMAAKGIGEKINAMLKKQEEVAKLREFIQKAYDLGDNVCQKVDLSTFTDDEVLRLAENLKKGMPIATPVFDGATEKEIKELLQLGGLPTSGQITLFDGRTGEQFERQVTVGYMYMLKLNHLVDDKMHARSTGSYSLVTQQPLGGKAQFGGQRFGEMEVWALEAYGAAYTLQEMLTVKSDDVNGRTKMYKNIVDGDHRMEPGMPESFNVLLKEIRSLGINIELEEE</sequence>
<reference key="1">
    <citation type="journal article" date="2007" name="PLoS Genet.">
        <title>The complete genome sequence of Yersinia pseudotuberculosis IP31758, the causative agent of Far East scarlet-like fever.</title>
        <authorList>
            <person name="Eppinger M."/>
            <person name="Rosovitz M.J."/>
            <person name="Fricke W.F."/>
            <person name="Rasko D.A."/>
            <person name="Kokorina G."/>
            <person name="Fayolle C."/>
            <person name="Lindler L.E."/>
            <person name="Carniel E."/>
            <person name="Ravel J."/>
        </authorList>
    </citation>
    <scope>NUCLEOTIDE SEQUENCE [LARGE SCALE GENOMIC DNA]</scope>
    <source>
        <strain>IP 31758</strain>
    </source>
</reference>
<keyword id="KW-0240">DNA-directed RNA polymerase</keyword>
<keyword id="KW-0548">Nucleotidyltransferase</keyword>
<keyword id="KW-0804">Transcription</keyword>
<keyword id="KW-0808">Transferase</keyword>
<protein>
    <recommendedName>
        <fullName evidence="1">DNA-directed RNA polymerase subunit beta</fullName>
        <shortName evidence="1">RNAP subunit beta</shortName>
        <ecNumber evidence="1">2.7.7.6</ecNumber>
    </recommendedName>
    <alternativeName>
        <fullName evidence="1">RNA polymerase subunit beta</fullName>
    </alternativeName>
    <alternativeName>
        <fullName evidence="1">Transcriptase subunit beta</fullName>
    </alternativeName>
</protein>
<proteinExistence type="inferred from homology"/>